<evidence type="ECO:0000250" key="1">
    <source>
        <dbReference type="UniProtKB" id="P00410"/>
    </source>
</evidence>
<evidence type="ECO:0000255" key="2"/>
<evidence type="ECO:0000305" key="3"/>
<keyword id="KW-0186">Copper</keyword>
<keyword id="KW-0249">Electron transport</keyword>
<keyword id="KW-0460">Magnesium</keyword>
<keyword id="KW-0472">Membrane</keyword>
<keyword id="KW-0479">Metal-binding</keyword>
<keyword id="KW-0496">Mitochondrion</keyword>
<keyword id="KW-0999">Mitochondrion inner membrane</keyword>
<keyword id="KW-0679">Respiratory chain</keyword>
<keyword id="KW-1278">Translocase</keyword>
<keyword id="KW-0812">Transmembrane</keyword>
<keyword id="KW-1133">Transmembrane helix</keyword>
<keyword id="KW-0813">Transport</keyword>
<dbReference type="EC" id="7.1.1.9"/>
<dbReference type="EMBL" id="M95152">
    <property type="protein sequence ID" value="AAA02782.2"/>
    <property type="molecule type" value="Genomic_DNA"/>
</dbReference>
<dbReference type="SMR" id="P67796"/>
<dbReference type="GO" id="GO:0005743">
    <property type="term" value="C:mitochondrial inner membrane"/>
    <property type="evidence" value="ECO:0007669"/>
    <property type="project" value="UniProtKB-SubCell"/>
</dbReference>
<dbReference type="GO" id="GO:0005507">
    <property type="term" value="F:copper ion binding"/>
    <property type="evidence" value="ECO:0007669"/>
    <property type="project" value="InterPro"/>
</dbReference>
<dbReference type="GO" id="GO:0004129">
    <property type="term" value="F:cytochrome-c oxidase activity"/>
    <property type="evidence" value="ECO:0007669"/>
    <property type="project" value="UniProtKB-EC"/>
</dbReference>
<dbReference type="GO" id="GO:0042773">
    <property type="term" value="P:ATP synthesis coupled electron transport"/>
    <property type="evidence" value="ECO:0007669"/>
    <property type="project" value="TreeGrafter"/>
</dbReference>
<dbReference type="CDD" id="cd13912">
    <property type="entry name" value="CcO_II_C"/>
    <property type="match status" value="1"/>
</dbReference>
<dbReference type="FunFam" id="1.10.287.90:FF:000006">
    <property type="entry name" value="Cytochrome c oxidase subunit 2"/>
    <property type="match status" value="1"/>
</dbReference>
<dbReference type="FunFam" id="2.60.40.420:FF:000001">
    <property type="entry name" value="Cytochrome c oxidase subunit 2"/>
    <property type="match status" value="1"/>
</dbReference>
<dbReference type="Gene3D" id="1.10.287.90">
    <property type="match status" value="1"/>
</dbReference>
<dbReference type="Gene3D" id="2.60.40.420">
    <property type="entry name" value="Cupredoxins - blue copper proteins"/>
    <property type="match status" value="1"/>
</dbReference>
<dbReference type="InterPro" id="IPR045187">
    <property type="entry name" value="CcO_II"/>
</dbReference>
<dbReference type="InterPro" id="IPR002429">
    <property type="entry name" value="CcO_II-like_C"/>
</dbReference>
<dbReference type="InterPro" id="IPR034210">
    <property type="entry name" value="CcO_II_C"/>
</dbReference>
<dbReference type="InterPro" id="IPR001505">
    <property type="entry name" value="Copper_CuA"/>
</dbReference>
<dbReference type="InterPro" id="IPR008972">
    <property type="entry name" value="Cupredoxin"/>
</dbReference>
<dbReference type="InterPro" id="IPR014222">
    <property type="entry name" value="Cyt_c_oxidase_su2"/>
</dbReference>
<dbReference type="InterPro" id="IPR011759">
    <property type="entry name" value="Cyt_c_oxidase_su2_TM_dom"/>
</dbReference>
<dbReference type="InterPro" id="IPR036257">
    <property type="entry name" value="Cyt_c_oxidase_su2_TM_sf"/>
</dbReference>
<dbReference type="NCBIfam" id="TIGR02866">
    <property type="entry name" value="CoxB"/>
    <property type="match status" value="1"/>
</dbReference>
<dbReference type="PANTHER" id="PTHR22888:SF9">
    <property type="entry name" value="CYTOCHROME C OXIDASE SUBUNIT 2"/>
    <property type="match status" value="1"/>
</dbReference>
<dbReference type="PANTHER" id="PTHR22888">
    <property type="entry name" value="CYTOCHROME C OXIDASE, SUBUNIT II"/>
    <property type="match status" value="1"/>
</dbReference>
<dbReference type="Pfam" id="PF00116">
    <property type="entry name" value="COX2"/>
    <property type="match status" value="1"/>
</dbReference>
<dbReference type="Pfam" id="PF02790">
    <property type="entry name" value="COX2_TM"/>
    <property type="match status" value="1"/>
</dbReference>
<dbReference type="PRINTS" id="PR01166">
    <property type="entry name" value="CYCOXIDASEII"/>
</dbReference>
<dbReference type="SUPFAM" id="SSF49503">
    <property type="entry name" value="Cupredoxins"/>
    <property type="match status" value="1"/>
</dbReference>
<dbReference type="SUPFAM" id="SSF81464">
    <property type="entry name" value="Cytochrome c oxidase subunit II-like, transmembrane region"/>
    <property type="match status" value="1"/>
</dbReference>
<dbReference type="PROSITE" id="PS00078">
    <property type="entry name" value="COX2"/>
    <property type="match status" value="1"/>
</dbReference>
<dbReference type="PROSITE" id="PS50857">
    <property type="entry name" value="COX2_CUA"/>
    <property type="match status" value="1"/>
</dbReference>
<dbReference type="PROSITE" id="PS50999">
    <property type="entry name" value="COX2_TM"/>
    <property type="match status" value="1"/>
</dbReference>
<feature type="chain" id="PRO_0000183587" description="Cytochrome c oxidase subunit 2">
    <location>
        <begin position="1"/>
        <end position="229"/>
    </location>
</feature>
<feature type="topological domain" description="Mitochondrial intermembrane" evidence="2">
    <location>
        <begin position="1"/>
        <end position="26"/>
    </location>
</feature>
<feature type="transmembrane region" description="Helical" evidence="2">
    <location>
        <begin position="27"/>
        <end position="48"/>
    </location>
</feature>
<feature type="topological domain" description="Mitochondrial matrix" evidence="2">
    <location>
        <begin position="49"/>
        <end position="62"/>
    </location>
</feature>
<feature type="transmembrane region" description="Helical" evidence="2">
    <location>
        <begin position="63"/>
        <end position="82"/>
    </location>
</feature>
<feature type="topological domain" description="Mitochondrial intermembrane" evidence="2">
    <location>
        <begin position="83"/>
        <end position="229"/>
    </location>
</feature>
<feature type="binding site" evidence="1">
    <location>
        <position position="161"/>
    </location>
    <ligand>
        <name>Cu cation</name>
        <dbReference type="ChEBI" id="CHEBI:23378"/>
        <label>A1</label>
    </ligand>
</feature>
<feature type="binding site" evidence="1">
    <location>
        <position position="196"/>
    </location>
    <ligand>
        <name>Cu cation</name>
        <dbReference type="ChEBI" id="CHEBI:23378"/>
        <label>A1</label>
    </ligand>
</feature>
<feature type="binding site" evidence="1">
    <location>
        <position position="196"/>
    </location>
    <ligand>
        <name>Cu cation</name>
        <dbReference type="ChEBI" id="CHEBI:23378"/>
        <label>A2</label>
    </ligand>
</feature>
<feature type="binding site" evidence="1">
    <location>
        <position position="198"/>
    </location>
    <ligand>
        <name>Cu cation</name>
        <dbReference type="ChEBI" id="CHEBI:23378"/>
        <label>A2</label>
    </ligand>
</feature>
<feature type="binding site" evidence="1">
    <location>
        <position position="198"/>
    </location>
    <ligand>
        <name>Mg(2+)</name>
        <dbReference type="ChEBI" id="CHEBI:18420"/>
        <note>ligand shared with subunit 1</note>
    </ligand>
</feature>
<feature type="binding site" evidence="1">
    <location>
        <position position="200"/>
    </location>
    <ligand>
        <name>Cu cation</name>
        <dbReference type="ChEBI" id="CHEBI:23378"/>
        <label>A1</label>
    </ligand>
</feature>
<feature type="binding site" evidence="1">
    <location>
        <position position="200"/>
    </location>
    <ligand>
        <name>Cu cation</name>
        <dbReference type="ChEBI" id="CHEBI:23378"/>
        <label>A2</label>
    </ligand>
</feature>
<feature type="binding site" evidence="1">
    <location>
        <position position="204"/>
    </location>
    <ligand>
        <name>Cu cation</name>
        <dbReference type="ChEBI" id="CHEBI:23378"/>
        <label>A2</label>
    </ligand>
</feature>
<feature type="binding site" evidence="1">
    <location>
        <position position="207"/>
    </location>
    <ligand>
        <name>Cu cation</name>
        <dbReference type="ChEBI" id="CHEBI:23378"/>
        <label>A1</label>
    </ligand>
</feature>
<comment type="function">
    <text evidence="1">Component of the cytochrome c oxidase, the last enzyme in the mitochondrial electron transport chain which drives oxidative phosphorylation. The respiratory chain contains 3 multisubunit complexes succinate dehydrogenase (complex II, CII), ubiquinol-cytochrome c oxidoreductase (cytochrome b-c1 complex, complex III, CIII) and cytochrome c oxidase (complex IV, CIV), that cooperate to transfer electrons derived from NADH and succinate to molecular oxygen, creating an electrochemical gradient over the inner membrane that drives transmembrane transport and the ATP synthase. Cytochrome c oxidase is the component of the respiratory chain that catalyzes the reduction of oxygen to water. Electrons originating from reduced cytochrome c in the intermembrane space (IMS) are transferred via the dinuclear copper A center (CU(A)) of subunit 2 and heme A of subunit 1 to the active site in subunit 1, a binuclear center (BNC) formed by heme A3 and copper B (CU(B)). The BNC reduces molecular oxygen to 2 water molecules using 4 electrons from cytochrome c in the IMS and 4 protons from the mitochondrial matrix.</text>
</comment>
<comment type="catalytic activity">
    <reaction evidence="1">
        <text>4 Fe(II)-[cytochrome c] + O2 + 8 H(+)(in) = 4 Fe(III)-[cytochrome c] + 2 H2O + 4 H(+)(out)</text>
        <dbReference type="Rhea" id="RHEA:11436"/>
        <dbReference type="Rhea" id="RHEA-COMP:10350"/>
        <dbReference type="Rhea" id="RHEA-COMP:14399"/>
        <dbReference type="ChEBI" id="CHEBI:15377"/>
        <dbReference type="ChEBI" id="CHEBI:15378"/>
        <dbReference type="ChEBI" id="CHEBI:15379"/>
        <dbReference type="ChEBI" id="CHEBI:29033"/>
        <dbReference type="ChEBI" id="CHEBI:29034"/>
        <dbReference type="EC" id="7.1.1.9"/>
    </reaction>
    <physiologicalReaction direction="left-to-right" evidence="1">
        <dbReference type="Rhea" id="RHEA:11437"/>
    </physiologicalReaction>
</comment>
<comment type="cofactor">
    <cofactor evidence="1">
        <name>Cu cation</name>
        <dbReference type="ChEBI" id="CHEBI:23378"/>
    </cofactor>
    <text evidence="1">Binds a dinuclear copper A center per subunit.</text>
</comment>
<comment type="subunit">
    <text evidence="1">Component of the cytochrome c oxidase (complex IV, CIV), a multisubunit enzyme composed of a catalytic core of 3 subunits and several supernumerary subunits. The complex exists as a monomer or a dimer and forms supercomplexes (SCs) in the inner mitochondrial membrane with ubiquinol-cytochrome c oxidoreductase (cytochrome b-c1 complex, complex III, CIII).</text>
</comment>
<comment type="subcellular location">
    <subcellularLocation>
        <location evidence="1">Mitochondrion inner membrane</location>
        <topology evidence="1">Multi-pass membrane protein</topology>
    </subcellularLocation>
</comment>
<comment type="similarity">
    <text evidence="3">Belongs to the cytochrome c oxidase subunit 2 family.</text>
</comment>
<proteinExistence type="inferred from homology"/>
<organism>
    <name type="scientific">Drosophila tolteca</name>
    <name type="common">Fruit fly</name>
    <dbReference type="NCBI Taxonomy" id="7259"/>
    <lineage>
        <taxon>Eukaryota</taxon>
        <taxon>Metazoa</taxon>
        <taxon>Ecdysozoa</taxon>
        <taxon>Arthropoda</taxon>
        <taxon>Hexapoda</taxon>
        <taxon>Insecta</taxon>
        <taxon>Pterygota</taxon>
        <taxon>Neoptera</taxon>
        <taxon>Endopterygota</taxon>
        <taxon>Diptera</taxon>
        <taxon>Brachycera</taxon>
        <taxon>Muscomorpha</taxon>
        <taxon>Ephydroidea</taxon>
        <taxon>Drosophilidae</taxon>
        <taxon>Drosophila</taxon>
        <taxon>Sophophora</taxon>
    </lineage>
</organism>
<geneLocation type="mitochondrion"/>
<sequence length="229" mass="26276">MSTWANLGLQDSASPLMEQLIFFHDHALLILVMITVLVGYLMFMLFFNSYVNRFLLHGQLIEMIWTILPAIILLFIAMPSLRLLYLLDEINEPSITLKSIGHQWYWSYEYSDFNNIEFDSYMIPTNELANDGFRLLDVDNRIILPMNSQIRILVTAADVIHSWTVPALGVKVDGTPGRLNQTNFFINRPGLFYGQCSEICGANHSFMPIVIESVPVNYFIKWISNSVNS</sequence>
<name>COX2_DROTO</name>
<reference key="1">
    <citation type="journal article" date="1993" name="Mol. Biol. Evol.">
        <title>Relationships in the Drosophila obscura species group, inferred from mitochondrial cytochrome oxidase II sequences.</title>
        <authorList>
            <person name="Beckenbach A.T."/>
            <person name="Wei Y.W."/>
            <person name="Liu H."/>
        </authorList>
    </citation>
    <scope>NUCLEOTIDE SEQUENCE [GENOMIC DNA]</scope>
</reference>
<accession>P67796</accession>
<accession>P29862</accession>
<protein>
    <recommendedName>
        <fullName>Cytochrome c oxidase subunit 2</fullName>
        <ecNumber>7.1.1.9</ecNumber>
    </recommendedName>
    <alternativeName>
        <fullName>Cytochrome c oxidase polypeptide II</fullName>
    </alternativeName>
</protein>
<gene>
    <name type="primary">mt:CoII</name>
    <name type="synonym">CoII</name>
</gene>